<comment type="function">
    <text evidence="2">With S4 and S5 plays an important role in translational accuracy.</text>
</comment>
<comment type="function">
    <text evidence="2">Interacts with and stabilizes bases of the 16S rRNA that are involved in tRNA selection in the A site and with the mRNA backbone. Located at the interface of the 30S and 50S subunits, it traverses the body of the 30S subunit contacting proteins on the other side and probably holding the rRNA structure together. The combined cluster of proteins S8, S12 and S17 appears to hold together the shoulder and platform of the 30S subunit.</text>
</comment>
<comment type="subunit">
    <text evidence="2">Part of the 30S ribosomal subunit. Contacts proteins S8 and S17. May interact with IF1 in the 30S initiation complex.</text>
</comment>
<comment type="similarity">
    <text evidence="2">Belongs to the universal ribosomal protein uS12 family.</text>
</comment>
<gene>
    <name evidence="2" type="primary">rpsL</name>
    <name type="ordered locus">BH0387</name>
</gene>
<dbReference type="EMBL" id="CP000048">
    <property type="protein sequence ID" value="AAX16896.1"/>
    <property type="molecule type" value="Genomic_DNA"/>
</dbReference>
<dbReference type="RefSeq" id="WP_012422153.1">
    <property type="nucleotide sequence ID" value="NZ_CP073136.1"/>
</dbReference>
<dbReference type="SMR" id="B2S090"/>
<dbReference type="GeneID" id="71843193"/>
<dbReference type="KEGG" id="bhr:BH0387"/>
<dbReference type="HOGENOM" id="CLU_104295_1_2_12"/>
<dbReference type="Proteomes" id="UP000008834">
    <property type="component" value="Chromosome"/>
</dbReference>
<dbReference type="GO" id="GO:0015935">
    <property type="term" value="C:small ribosomal subunit"/>
    <property type="evidence" value="ECO:0007669"/>
    <property type="project" value="InterPro"/>
</dbReference>
<dbReference type="GO" id="GO:0019843">
    <property type="term" value="F:rRNA binding"/>
    <property type="evidence" value="ECO:0007669"/>
    <property type="project" value="UniProtKB-UniRule"/>
</dbReference>
<dbReference type="GO" id="GO:0003735">
    <property type="term" value="F:structural constituent of ribosome"/>
    <property type="evidence" value="ECO:0007669"/>
    <property type="project" value="InterPro"/>
</dbReference>
<dbReference type="GO" id="GO:0000049">
    <property type="term" value="F:tRNA binding"/>
    <property type="evidence" value="ECO:0007669"/>
    <property type="project" value="UniProtKB-UniRule"/>
</dbReference>
<dbReference type="GO" id="GO:0006412">
    <property type="term" value="P:translation"/>
    <property type="evidence" value="ECO:0007669"/>
    <property type="project" value="UniProtKB-UniRule"/>
</dbReference>
<dbReference type="CDD" id="cd03368">
    <property type="entry name" value="Ribosomal_S12"/>
    <property type="match status" value="1"/>
</dbReference>
<dbReference type="FunFam" id="2.40.50.140:FF:000001">
    <property type="entry name" value="30S ribosomal protein S12"/>
    <property type="match status" value="1"/>
</dbReference>
<dbReference type="Gene3D" id="2.40.50.140">
    <property type="entry name" value="Nucleic acid-binding proteins"/>
    <property type="match status" value="1"/>
</dbReference>
<dbReference type="HAMAP" id="MF_00403_B">
    <property type="entry name" value="Ribosomal_uS12_B"/>
    <property type="match status" value="1"/>
</dbReference>
<dbReference type="InterPro" id="IPR012340">
    <property type="entry name" value="NA-bd_OB-fold"/>
</dbReference>
<dbReference type="InterPro" id="IPR006032">
    <property type="entry name" value="Ribosomal_uS12"/>
</dbReference>
<dbReference type="InterPro" id="IPR005679">
    <property type="entry name" value="Ribosomal_uS12_bac"/>
</dbReference>
<dbReference type="NCBIfam" id="TIGR00981">
    <property type="entry name" value="rpsL_bact"/>
    <property type="match status" value="1"/>
</dbReference>
<dbReference type="PANTHER" id="PTHR11652">
    <property type="entry name" value="30S RIBOSOMAL PROTEIN S12 FAMILY MEMBER"/>
    <property type="match status" value="1"/>
</dbReference>
<dbReference type="Pfam" id="PF00164">
    <property type="entry name" value="Ribosom_S12_S23"/>
    <property type="match status" value="1"/>
</dbReference>
<dbReference type="PIRSF" id="PIRSF002133">
    <property type="entry name" value="Ribosomal_S12/S23"/>
    <property type="match status" value="1"/>
</dbReference>
<dbReference type="PRINTS" id="PR01034">
    <property type="entry name" value="RIBOSOMALS12"/>
</dbReference>
<dbReference type="SUPFAM" id="SSF50249">
    <property type="entry name" value="Nucleic acid-binding proteins"/>
    <property type="match status" value="1"/>
</dbReference>
<dbReference type="PROSITE" id="PS00055">
    <property type="entry name" value="RIBOSOMAL_S12"/>
    <property type="match status" value="1"/>
</dbReference>
<sequence>MPTINQLIKKPRKSQKEKTASPALQNCPQRRGICTRVMTVTPKKPNSALRKVARVRLSNGFEVTAYIPGIGHNLQEHSVVLIRGGRVKDLPGVRYHIIRGAKDTLGVNNRKQGRSKYGTKKPKA</sequence>
<accession>B2S090</accession>
<evidence type="ECO:0000250" key="1"/>
<evidence type="ECO:0000255" key="2">
    <source>
        <dbReference type="HAMAP-Rule" id="MF_00403"/>
    </source>
</evidence>
<evidence type="ECO:0000256" key="3">
    <source>
        <dbReference type="SAM" id="MobiDB-lite"/>
    </source>
</evidence>
<evidence type="ECO:0000305" key="4"/>
<keyword id="KW-0488">Methylation</keyword>
<keyword id="KW-0687">Ribonucleoprotein</keyword>
<keyword id="KW-0689">Ribosomal protein</keyword>
<keyword id="KW-0694">RNA-binding</keyword>
<keyword id="KW-0699">rRNA-binding</keyword>
<keyword id="KW-0820">tRNA-binding</keyword>
<organism>
    <name type="scientific">Borrelia hermsii (strain HS1 / DAH)</name>
    <dbReference type="NCBI Taxonomy" id="314723"/>
    <lineage>
        <taxon>Bacteria</taxon>
        <taxon>Pseudomonadati</taxon>
        <taxon>Spirochaetota</taxon>
        <taxon>Spirochaetia</taxon>
        <taxon>Spirochaetales</taxon>
        <taxon>Borreliaceae</taxon>
        <taxon>Borrelia</taxon>
    </lineage>
</organism>
<proteinExistence type="inferred from homology"/>
<name>RS12_BORHD</name>
<reference key="1">
    <citation type="submission" date="2004-12" db="EMBL/GenBank/DDBJ databases">
        <title>The genome sequence of Borrelia hermsii and Borrelia turicatae: comparative analysis of two agents of endemic N. America relapsing fever.</title>
        <authorList>
            <person name="Porcella S.F."/>
            <person name="Raffel S.J."/>
            <person name="Schrumpf M.E."/>
            <person name="Montgomery B."/>
            <person name="Smith T."/>
            <person name="Schwan T.G."/>
        </authorList>
    </citation>
    <scope>NUCLEOTIDE SEQUENCE [LARGE SCALE GENOMIC DNA]</scope>
    <source>
        <strain>HS1 / DAH</strain>
    </source>
</reference>
<feature type="chain" id="PRO_1000194132" description="Small ribosomal subunit protein uS12">
    <location>
        <begin position="1"/>
        <end position="124"/>
    </location>
</feature>
<feature type="region of interest" description="Disordered" evidence="3">
    <location>
        <begin position="1"/>
        <end position="24"/>
    </location>
</feature>
<feature type="modified residue" description="3-methylthioaspartic acid" evidence="1">
    <location>
        <position position="89"/>
    </location>
</feature>
<protein>
    <recommendedName>
        <fullName evidence="2">Small ribosomal subunit protein uS12</fullName>
    </recommendedName>
    <alternativeName>
        <fullName evidence="4">30S ribosomal protein S12</fullName>
    </alternativeName>
</protein>